<comment type="function">
    <text>This protein found in the seeds of many leguminous and non-leguminous plants is the source of sulfur-containing amino acids in seed meals.</text>
</comment>
<comment type="subunit">
    <text>Hexamer; each subunit is composed of an acidic and a basic chain derived from a single precursor and linked by a disulfide bond.</text>
</comment>
<comment type="similarity">
    <text evidence="4">Belongs to the 11S seed storage protein (globulins) family.</text>
</comment>
<sequence>MSKPFLSLLSLSLLLFASACLATSSEFDRLNQCQLDSINALEPDHRVESEAGLTETWNPNHPELKCAGVSLIRRTIDPNGLHLPSFSPSPQLIFIIQGKGVLGLSFPGCPETYEEPRSSQSRQESRQQQGDSHQKVRRFRKGDIIAIPSGIPYWTYNHGDEPLVAISLLDTSNIANQLDSTPRVFYLGGNPETEFPETQEEQQGRHRQKHSYPVGRRSGHHQQEEESEEQNEGNSVLSGFSSEFLAQTFNTEEDTAKRLRSPRDERSQIVRVEGGLRIIKPKGKEEEEKEQSHSHSHREEKEEEEEEEEDEEEKQRSEERKNGLEETICSAKIRENIADAARADLYNPRAGRISTANSLTLPVLRYLRLSAEYVRLYRNGIYAPHWNINANSLLYVIRGEGRVRIVNCQGNTVFDNKVRKGQLVVVPQNFVVAEQAGEEEGLEYVVFKTNDRAAVSHVQQVFRATPSEVLANAFGLRQRQVTELKLSGNRGPLVHPRSQSQSH</sequence>
<dbReference type="EMBL" id="X07014">
    <property type="protein sequence ID" value="CAA30067.1"/>
    <property type="molecule type" value="Genomic_DNA"/>
</dbReference>
<dbReference type="PIR" id="S00336">
    <property type="entry name" value="S00336"/>
</dbReference>
<dbReference type="SMR" id="P05692"/>
<dbReference type="GO" id="GO:0045735">
    <property type="term" value="F:nutrient reservoir activity"/>
    <property type="evidence" value="ECO:0007669"/>
    <property type="project" value="UniProtKB-KW"/>
</dbReference>
<dbReference type="CDD" id="cd02243">
    <property type="entry name" value="cupin_11S_legumin_C"/>
    <property type="match status" value="1"/>
</dbReference>
<dbReference type="CDD" id="cd02242">
    <property type="entry name" value="cupin_11S_legumin_N"/>
    <property type="match status" value="1"/>
</dbReference>
<dbReference type="FunFam" id="2.60.120.10:FF:000073">
    <property type="entry name" value="Glycinin G1"/>
    <property type="match status" value="1"/>
</dbReference>
<dbReference type="FunFam" id="2.60.120.10:FF:000124">
    <property type="entry name" value="Glycinin G5"/>
    <property type="match status" value="1"/>
</dbReference>
<dbReference type="Gene3D" id="2.60.120.10">
    <property type="entry name" value="Jelly Rolls"/>
    <property type="match status" value="2"/>
</dbReference>
<dbReference type="InterPro" id="IPR022379">
    <property type="entry name" value="11S_seedstore_CS"/>
</dbReference>
<dbReference type="InterPro" id="IPR006044">
    <property type="entry name" value="11S_seedstore_pln"/>
</dbReference>
<dbReference type="InterPro" id="IPR006045">
    <property type="entry name" value="Cupin_1"/>
</dbReference>
<dbReference type="InterPro" id="IPR014710">
    <property type="entry name" value="RmlC-like_jellyroll"/>
</dbReference>
<dbReference type="InterPro" id="IPR011051">
    <property type="entry name" value="RmlC_Cupin_sf"/>
</dbReference>
<dbReference type="InterPro" id="IPR050253">
    <property type="entry name" value="Seed_Storage-Functional"/>
</dbReference>
<dbReference type="PANTHER" id="PTHR31189:SF63">
    <property type="entry name" value="GLYCININ G5"/>
    <property type="match status" value="1"/>
</dbReference>
<dbReference type="PANTHER" id="PTHR31189">
    <property type="entry name" value="OS03G0336100 PROTEIN-RELATED"/>
    <property type="match status" value="1"/>
</dbReference>
<dbReference type="Pfam" id="PF00190">
    <property type="entry name" value="Cupin_1"/>
    <property type="match status" value="2"/>
</dbReference>
<dbReference type="PRINTS" id="PR00439">
    <property type="entry name" value="11SGLOBULIN"/>
</dbReference>
<dbReference type="SMART" id="SM00835">
    <property type="entry name" value="Cupin_1"/>
    <property type="match status" value="2"/>
</dbReference>
<dbReference type="SUPFAM" id="SSF51182">
    <property type="entry name" value="RmlC-like cupins"/>
    <property type="match status" value="1"/>
</dbReference>
<dbReference type="PROSITE" id="PS00305">
    <property type="entry name" value="11S_SEED_STORAGE"/>
    <property type="match status" value="1"/>
</dbReference>
<name>LEGJ_PEA</name>
<proteinExistence type="evidence at protein level"/>
<keyword id="KW-0903">Direct protein sequencing</keyword>
<keyword id="KW-1015">Disulfide bond</keyword>
<keyword id="KW-0708">Seed storage protein</keyword>
<keyword id="KW-0732">Signal</keyword>
<keyword id="KW-0758">Storage protein</keyword>
<evidence type="ECO:0000250" key="1"/>
<evidence type="ECO:0000255" key="2"/>
<evidence type="ECO:0000256" key="3">
    <source>
        <dbReference type="SAM" id="MobiDB-lite"/>
    </source>
</evidence>
<evidence type="ECO:0000305" key="4"/>
<reference key="1">
    <citation type="journal article" date="1988" name="Biochem. J.">
        <title>Two genes encoding 'minor' legumin polypeptides in pea (Pisum sativum L.). Characterization and complete sequence of the LegJ gene.</title>
        <authorList>
            <person name="Gatehouse J.A."/>
            <person name="Bown D."/>
            <person name="Gilroy J."/>
            <person name="Levasseur M."/>
            <person name="Castleton J."/>
            <person name="Ellis T.H.N."/>
        </authorList>
    </citation>
    <scope>NUCLEOTIDE SEQUENCE [GENOMIC DNA]</scope>
    <scope>PARTIAL PROTEIN SEQUENCE</scope>
    <source>
        <strain>cv. Feltham First</strain>
    </source>
</reference>
<protein>
    <recommendedName>
        <fullName>Legumin J</fullName>
    </recommendedName>
    <component>
        <recommendedName>
            <fullName>Legumin J alpha chain</fullName>
        </recommendedName>
        <alternativeName>
            <fullName>Legumin J acidic chain</fullName>
        </alternativeName>
    </component>
    <component>
        <recommendedName>
            <fullName>Legumin J beta chain</fullName>
        </recommendedName>
        <alternativeName>
            <fullName>Legumin J basic chain</fullName>
        </alternativeName>
    </component>
</protein>
<accession>P05692</accession>
<organism>
    <name type="scientific">Pisum sativum</name>
    <name type="common">Garden pea</name>
    <name type="synonym">Lathyrus oleraceus</name>
    <dbReference type="NCBI Taxonomy" id="3888"/>
    <lineage>
        <taxon>Eukaryota</taxon>
        <taxon>Viridiplantae</taxon>
        <taxon>Streptophyta</taxon>
        <taxon>Embryophyta</taxon>
        <taxon>Tracheophyta</taxon>
        <taxon>Spermatophyta</taxon>
        <taxon>Magnoliopsida</taxon>
        <taxon>eudicotyledons</taxon>
        <taxon>Gunneridae</taxon>
        <taxon>Pentapetalae</taxon>
        <taxon>rosids</taxon>
        <taxon>fabids</taxon>
        <taxon>Fabales</taxon>
        <taxon>Fabaceae</taxon>
        <taxon>Papilionoideae</taxon>
        <taxon>50 kb inversion clade</taxon>
        <taxon>NPAAA clade</taxon>
        <taxon>Hologalegina</taxon>
        <taxon>IRL clade</taxon>
        <taxon>Fabeae</taxon>
        <taxon>Pisum</taxon>
    </lineage>
</organism>
<feature type="signal peptide" evidence="2">
    <location>
        <begin position="1"/>
        <end position="22"/>
    </location>
</feature>
<feature type="chain" id="PRO_0000032072" description="Legumin J alpha chain">
    <location>
        <begin position="23"/>
        <end position="322"/>
    </location>
</feature>
<feature type="chain" id="PRO_0000032073" description="Legumin J beta chain">
    <location>
        <begin position="323"/>
        <end position="503"/>
    </location>
</feature>
<feature type="domain" description="Cupin type-1 1" evidence="2">
    <location>
        <begin position="38"/>
        <end position="257"/>
    </location>
</feature>
<feature type="domain" description="Cupin type-1 2" evidence="2">
    <location>
        <begin position="335"/>
        <end position="482"/>
    </location>
</feature>
<feature type="region of interest" description="Disordered" evidence="3">
    <location>
        <begin position="111"/>
        <end position="140"/>
    </location>
</feature>
<feature type="region of interest" description="Disordered" evidence="3">
    <location>
        <begin position="185"/>
        <end position="235"/>
    </location>
</feature>
<feature type="region of interest" description="Disordered" evidence="3">
    <location>
        <begin position="253"/>
        <end position="323"/>
    </location>
</feature>
<feature type="compositionally biased region" description="Low complexity" evidence="3">
    <location>
        <begin position="118"/>
        <end position="129"/>
    </location>
</feature>
<feature type="compositionally biased region" description="Basic and acidic residues" evidence="3">
    <location>
        <begin position="254"/>
        <end position="268"/>
    </location>
</feature>
<feature type="compositionally biased region" description="Basic and acidic residues" evidence="3">
    <location>
        <begin position="282"/>
        <end position="300"/>
    </location>
</feature>
<feature type="compositionally biased region" description="Acidic residues" evidence="3">
    <location>
        <begin position="301"/>
        <end position="312"/>
    </location>
</feature>
<feature type="compositionally biased region" description="Basic and acidic residues" evidence="3">
    <location>
        <begin position="313"/>
        <end position="323"/>
    </location>
</feature>
<feature type="disulfide bond" evidence="1">
    <location>
        <begin position="33"/>
        <end position="66"/>
    </location>
</feature>
<feature type="disulfide bond" description="Interchain (between alpha and beta chains)" evidence="2">
    <location>
        <begin position="109"/>
        <end position="329"/>
    </location>
</feature>
<gene>
    <name type="primary">LEGJ</name>
</gene>